<comment type="function">
    <text evidence="1">Assembles around the rod to form the L-ring and probably protects the motor/basal body from shearing forces during rotation.</text>
</comment>
<comment type="subunit">
    <text evidence="1">The basal body constitutes a major portion of the flagellar organelle and consists of four rings (L,P,S, and M) mounted on a central rod.</text>
</comment>
<comment type="subcellular location">
    <subcellularLocation>
        <location evidence="1">Periplasm</location>
    </subcellularLocation>
    <subcellularLocation>
        <location evidence="1">Bacterial flagellum basal body</location>
    </subcellularLocation>
</comment>
<comment type="similarity">
    <text evidence="1">Belongs to the FlgI family.</text>
</comment>
<protein>
    <recommendedName>
        <fullName evidence="1">Flagellar P-ring protein</fullName>
    </recommendedName>
    <alternativeName>
        <fullName evidence="1">Basal body P-ring protein</fullName>
    </alternativeName>
</protein>
<keyword id="KW-0975">Bacterial flagellum</keyword>
<keyword id="KW-0574">Periplasm</keyword>
<keyword id="KW-1185">Reference proteome</keyword>
<keyword id="KW-0732">Signal</keyword>
<gene>
    <name evidence="1" type="primary">flgI</name>
    <name type="ordered locus">WS1592</name>
</gene>
<dbReference type="EMBL" id="BX571661">
    <property type="protein sequence ID" value="CAE10631.1"/>
    <property type="molecule type" value="Genomic_DNA"/>
</dbReference>
<dbReference type="RefSeq" id="WP_011139415.1">
    <property type="nucleotide sequence ID" value="NC_005090.1"/>
</dbReference>
<dbReference type="SMR" id="Q7M8K6"/>
<dbReference type="STRING" id="273121.WS1592"/>
<dbReference type="KEGG" id="wsu:WS1592"/>
<dbReference type="eggNOG" id="COG1706">
    <property type="taxonomic scope" value="Bacteria"/>
</dbReference>
<dbReference type="HOGENOM" id="CLU_045235_1_0_7"/>
<dbReference type="Proteomes" id="UP000000422">
    <property type="component" value="Chromosome"/>
</dbReference>
<dbReference type="GO" id="GO:0009428">
    <property type="term" value="C:bacterial-type flagellum basal body, distal rod, P ring"/>
    <property type="evidence" value="ECO:0007669"/>
    <property type="project" value="InterPro"/>
</dbReference>
<dbReference type="GO" id="GO:0030288">
    <property type="term" value="C:outer membrane-bounded periplasmic space"/>
    <property type="evidence" value="ECO:0007669"/>
    <property type="project" value="InterPro"/>
</dbReference>
<dbReference type="GO" id="GO:0005198">
    <property type="term" value="F:structural molecule activity"/>
    <property type="evidence" value="ECO:0007669"/>
    <property type="project" value="InterPro"/>
</dbReference>
<dbReference type="GO" id="GO:0071973">
    <property type="term" value="P:bacterial-type flagellum-dependent cell motility"/>
    <property type="evidence" value="ECO:0007669"/>
    <property type="project" value="InterPro"/>
</dbReference>
<dbReference type="HAMAP" id="MF_00416">
    <property type="entry name" value="FlgI"/>
    <property type="match status" value="1"/>
</dbReference>
<dbReference type="InterPro" id="IPR001782">
    <property type="entry name" value="Flag_FlgI"/>
</dbReference>
<dbReference type="NCBIfam" id="NF003676">
    <property type="entry name" value="PRK05303.1"/>
    <property type="match status" value="1"/>
</dbReference>
<dbReference type="PANTHER" id="PTHR30381">
    <property type="entry name" value="FLAGELLAR P-RING PERIPLASMIC PROTEIN FLGI"/>
    <property type="match status" value="1"/>
</dbReference>
<dbReference type="PANTHER" id="PTHR30381:SF0">
    <property type="entry name" value="FLAGELLAR P-RING PROTEIN"/>
    <property type="match status" value="1"/>
</dbReference>
<dbReference type="Pfam" id="PF02119">
    <property type="entry name" value="FlgI"/>
    <property type="match status" value="1"/>
</dbReference>
<dbReference type="PRINTS" id="PR01010">
    <property type="entry name" value="FLGPRINGFLGI"/>
</dbReference>
<name>FLGI_WOLSU</name>
<proteinExistence type="inferred from homology"/>
<organism>
    <name type="scientific">Wolinella succinogenes (strain ATCC 29543 / DSM 1740 / CCUG 13145 / JCM 31913 / LMG 7466 / NCTC 11488 / FDC 602W)</name>
    <name type="common">Vibrio succinogenes</name>
    <dbReference type="NCBI Taxonomy" id="273121"/>
    <lineage>
        <taxon>Bacteria</taxon>
        <taxon>Pseudomonadati</taxon>
        <taxon>Campylobacterota</taxon>
        <taxon>Epsilonproteobacteria</taxon>
        <taxon>Campylobacterales</taxon>
        <taxon>Helicobacteraceae</taxon>
        <taxon>Wolinella</taxon>
    </lineage>
</organism>
<evidence type="ECO:0000255" key="1">
    <source>
        <dbReference type="HAMAP-Rule" id="MF_00416"/>
    </source>
</evidence>
<accession>Q7M8K6</accession>
<reference key="1">
    <citation type="journal article" date="2003" name="Proc. Natl. Acad. Sci. U.S.A.">
        <title>Complete genome sequence and analysis of Wolinella succinogenes.</title>
        <authorList>
            <person name="Baar C."/>
            <person name="Eppinger M."/>
            <person name="Raddatz G."/>
            <person name="Simon J."/>
            <person name="Lanz C."/>
            <person name="Klimmek O."/>
            <person name="Nandakumar R."/>
            <person name="Gross R."/>
            <person name="Rosinus A."/>
            <person name="Keller H."/>
            <person name="Jagtap P."/>
            <person name="Linke B."/>
            <person name="Meyer F."/>
            <person name="Lederer H."/>
            <person name="Schuster S.C."/>
        </authorList>
    </citation>
    <scope>NUCLEOTIDE SEQUENCE [LARGE SCALE GENOMIC DNA]</scope>
    <source>
        <strain>ATCC 29543 / DSM 1740 / CCUG 13145 / JCM 31913 / LMG 7466 / NCTC 11488 / FDC 602W</strain>
    </source>
</reference>
<sequence>MSKAIKILLPLLLFSLSLQAERIKDIANIVGVRDNQLIGYGLVVGLNGTGDKTTSKFTMQSIANMLESVNVKIDADDIKSKNVAAVMVTAKLPPFSRQGDKVDVLVSSIGDAKSLEGGTLILTPLTGVDGRIYATSQGAISIGGKNERGGGVNHPLAGMLYGGAIIEREIPLDLYSKTGATLSLKSSNFQNAARVQESLNQNFGTQVAIAIDPRTIKLQRPESMSMVEFLARVEEVEIDYNRENKIVIDERTGTVVAGVGVKVGPVVVTHGEITIKITPEMSADNGAMDMGEGIKLSLNTNTLSTSGQTPTVSSVARALQRMGATPKDVISILEAIKRSGAISADLEIL</sequence>
<feature type="signal peptide" evidence="1">
    <location>
        <begin position="1"/>
        <end position="20"/>
    </location>
</feature>
<feature type="chain" id="PRO_0000041807" description="Flagellar P-ring protein">
    <location>
        <begin position="21"/>
        <end position="349"/>
    </location>
</feature>